<sequence length="496" mass="55914">MDRMKKIKRQLSMTLRGGRGIDKTNGVPEQIGLDESGGGGGSDLGEAPTRIAPGELRSVRGPLSSAPEIVHEDMKMGSDGESDQASATSSDEVQSPVRVRMRNHPPRKISTEDINKRLSLPADIRLPEGYLEKLTLNSPIFDKPLSRRLRRVSLSEIGFGKLETYIKLDKLGEGTYATVYKGKSKLTDNLVALKEIRLEHEEGAPCTAIREVSLLKDLKHANIVTLHDIIHTEKSLTLVFEYLDKDLKQYLDDCGNVINMHNVKLFLFQLLRGLAYCHRQKVLHRDLKPQNLLINERGELKLADFGLARAKSIPTKTYSNEVVTLWYRPPDILLGSTDYSTQIDMWGVGCIFYEMATGRPLFPGSTVEEQLHFIFRILGTPTEETWPGILSNEEFRTYNYPKYRAEALLSHAPRLDSDGADLLTKLLQFEGRNRISAEDARKHPFFLSLGERIHKLPDTTSIFALKEVQLQKEANIRSTSMPDSGRPAFRVVDTEF</sequence>
<gene>
    <name type="primary">Cdk16</name>
    <name type="synonym">Crk5</name>
    <name type="synonym">Pctaire1</name>
    <name type="synonym">Pctk1</name>
</gene>
<protein>
    <recommendedName>
        <fullName>Cyclin-dependent kinase 16</fullName>
        <ecNumber evidence="7 9 10 12">2.7.11.22</ecNumber>
    </recommendedName>
    <alternativeName>
        <fullName>CRK5</fullName>
    </alternativeName>
    <alternativeName>
        <fullName>Cell division protein kinase 16</fullName>
    </alternativeName>
    <alternativeName>
        <fullName>PCTAIRE-motif protein kinase 1</fullName>
    </alternativeName>
    <alternativeName>
        <fullName>Serine/threonine-protein kinase PCTAIRE-1</fullName>
    </alternativeName>
</protein>
<name>CDK16_MOUSE</name>
<dbReference type="EC" id="2.7.11.22" evidence="7 9 10 12"/>
<dbReference type="EMBL" id="X69025">
    <property type="protein sequence ID" value="CAA48787.1"/>
    <property type="molecule type" value="mRNA"/>
</dbReference>
<dbReference type="EMBL" id="BC011069">
    <property type="protein sequence ID" value="AAH11069.1"/>
    <property type="molecule type" value="mRNA"/>
</dbReference>
<dbReference type="EMBL" id="X64606">
    <property type="protein sequence ID" value="CAA45890.1"/>
    <property type="molecule type" value="mRNA"/>
</dbReference>
<dbReference type="CCDS" id="CCDS30045.1">
    <molecule id="Q04735-1"/>
</dbReference>
<dbReference type="CCDS" id="CCDS81103.1">
    <molecule id="Q04735-2"/>
</dbReference>
<dbReference type="PIR" id="S30435">
    <property type="entry name" value="S30435"/>
</dbReference>
<dbReference type="RefSeq" id="NP_001297385.1">
    <molecule id="Q04735-2"/>
    <property type="nucleotide sequence ID" value="NM_001310456.2"/>
</dbReference>
<dbReference type="RefSeq" id="NP_001398634.1">
    <molecule id="Q04735-1"/>
    <property type="nucleotide sequence ID" value="NM_001411705.1"/>
</dbReference>
<dbReference type="RefSeq" id="NP_001398636.1">
    <molecule id="Q04735-2"/>
    <property type="nucleotide sequence ID" value="NM_001411707.1"/>
</dbReference>
<dbReference type="RefSeq" id="NP_035179.1">
    <molecule id="Q04735-1"/>
    <property type="nucleotide sequence ID" value="NM_011049.6"/>
</dbReference>
<dbReference type="RefSeq" id="XP_006527633.1">
    <property type="nucleotide sequence ID" value="XM_006527570.1"/>
</dbReference>
<dbReference type="SMR" id="Q04735"/>
<dbReference type="BioGRID" id="202064">
    <property type="interactions" value="1"/>
</dbReference>
<dbReference type="CORUM" id="Q04735"/>
<dbReference type="FunCoup" id="Q04735">
    <property type="interactions" value="1008"/>
</dbReference>
<dbReference type="IntAct" id="Q04735">
    <property type="interactions" value="3"/>
</dbReference>
<dbReference type="MINT" id="Q04735"/>
<dbReference type="STRING" id="10090.ENSMUSP00000033380"/>
<dbReference type="iPTMnet" id="Q04735"/>
<dbReference type="PhosphoSitePlus" id="Q04735"/>
<dbReference type="jPOST" id="Q04735"/>
<dbReference type="PaxDb" id="10090-ENSMUSP00000033380"/>
<dbReference type="PeptideAtlas" id="Q04735"/>
<dbReference type="ProteomicsDB" id="281293">
    <molecule id="Q04735-1"/>
</dbReference>
<dbReference type="ProteomicsDB" id="281294">
    <molecule id="Q04735-2"/>
</dbReference>
<dbReference type="Pumba" id="Q04735"/>
<dbReference type="Antibodypedia" id="374">
    <property type="antibodies" value="232 antibodies from 31 providers"/>
</dbReference>
<dbReference type="DNASU" id="18555"/>
<dbReference type="Ensembl" id="ENSMUST00000033380.7">
    <molecule id="Q04735-1"/>
    <property type="protein sequence ID" value="ENSMUSP00000033380.7"/>
    <property type="gene ID" value="ENSMUSG00000031065.15"/>
</dbReference>
<dbReference type="Ensembl" id="ENSMUST00000115364.8">
    <molecule id="Q04735-2"/>
    <property type="protein sequence ID" value="ENSMUSP00000111021.2"/>
    <property type="gene ID" value="ENSMUSG00000031065.15"/>
</dbReference>
<dbReference type="GeneID" id="18555"/>
<dbReference type="KEGG" id="mmu:18555"/>
<dbReference type="UCSC" id="uc009sto.1">
    <molecule id="Q04735-1"/>
    <property type="organism name" value="mouse"/>
</dbReference>
<dbReference type="AGR" id="MGI:97516"/>
<dbReference type="CTD" id="5127"/>
<dbReference type="MGI" id="MGI:97516">
    <property type="gene designation" value="Cdk16"/>
</dbReference>
<dbReference type="VEuPathDB" id="HostDB:ENSMUSG00000031065"/>
<dbReference type="eggNOG" id="KOG0594">
    <property type="taxonomic scope" value="Eukaryota"/>
</dbReference>
<dbReference type="GeneTree" id="ENSGT00940000156963"/>
<dbReference type="HOGENOM" id="CLU_000288_154_3_1"/>
<dbReference type="InParanoid" id="Q04735"/>
<dbReference type="OMA" id="LIFHMLG"/>
<dbReference type="OrthoDB" id="1732493at2759"/>
<dbReference type="PhylomeDB" id="Q04735"/>
<dbReference type="TreeFam" id="TF106508"/>
<dbReference type="BRENDA" id="2.7.11.22">
    <property type="organism ID" value="3474"/>
</dbReference>
<dbReference type="BioGRID-ORCS" id="18555">
    <property type="hits" value="1 hit in 84 CRISPR screens"/>
</dbReference>
<dbReference type="CD-CODE" id="CE726F99">
    <property type="entry name" value="Postsynaptic density"/>
</dbReference>
<dbReference type="ChiTaRS" id="Cdk16">
    <property type="organism name" value="mouse"/>
</dbReference>
<dbReference type="PRO" id="PR:Q04735"/>
<dbReference type="Proteomes" id="UP000000589">
    <property type="component" value="Chromosome X"/>
</dbReference>
<dbReference type="RNAct" id="Q04735">
    <property type="molecule type" value="protein"/>
</dbReference>
<dbReference type="Bgee" id="ENSMUSG00000031065">
    <property type="expression patterns" value="Expressed in bone fossa and 257 other cell types or tissues"/>
</dbReference>
<dbReference type="ExpressionAtlas" id="Q04735">
    <property type="expression patterns" value="baseline and differential"/>
</dbReference>
<dbReference type="GO" id="GO:0000307">
    <property type="term" value="C:cyclin-dependent protein kinase holoenzyme complex"/>
    <property type="evidence" value="ECO:0007669"/>
    <property type="project" value="Ensembl"/>
</dbReference>
<dbReference type="GO" id="GO:0005737">
    <property type="term" value="C:cytoplasm"/>
    <property type="evidence" value="ECO:0000314"/>
    <property type="project" value="UniProtKB"/>
</dbReference>
<dbReference type="GO" id="GO:0009898">
    <property type="term" value="C:cytoplasmic side of plasma membrane"/>
    <property type="evidence" value="ECO:0000250"/>
    <property type="project" value="UniProtKB"/>
</dbReference>
<dbReference type="GO" id="GO:0005829">
    <property type="term" value="C:cytosol"/>
    <property type="evidence" value="ECO:0007669"/>
    <property type="project" value="Ensembl"/>
</dbReference>
<dbReference type="GO" id="GO:0015630">
    <property type="term" value="C:microtubule cytoskeleton"/>
    <property type="evidence" value="ECO:0007669"/>
    <property type="project" value="Ensembl"/>
</dbReference>
<dbReference type="GO" id="GO:0043005">
    <property type="term" value="C:neuron projection"/>
    <property type="evidence" value="ECO:0007669"/>
    <property type="project" value="UniProtKB-KW"/>
</dbReference>
<dbReference type="GO" id="GO:0005886">
    <property type="term" value="C:plasma membrane"/>
    <property type="evidence" value="ECO:0000314"/>
    <property type="project" value="UniProtKB"/>
</dbReference>
<dbReference type="GO" id="GO:0045202">
    <property type="term" value="C:synapse"/>
    <property type="evidence" value="ECO:0007669"/>
    <property type="project" value="UniProtKB-SubCell"/>
</dbReference>
<dbReference type="GO" id="GO:0030133">
    <property type="term" value="C:transport vesicle"/>
    <property type="evidence" value="ECO:0007669"/>
    <property type="project" value="UniProtKB-SubCell"/>
</dbReference>
<dbReference type="GO" id="GO:0005524">
    <property type="term" value="F:ATP binding"/>
    <property type="evidence" value="ECO:0007669"/>
    <property type="project" value="UniProtKB-KW"/>
</dbReference>
<dbReference type="GO" id="GO:0004693">
    <property type="term" value="F:cyclin-dependent protein serine/threonine kinase activity"/>
    <property type="evidence" value="ECO:0007669"/>
    <property type="project" value="UniProtKB-EC"/>
</dbReference>
<dbReference type="GO" id="GO:0106310">
    <property type="term" value="F:protein serine kinase activity"/>
    <property type="evidence" value="ECO:0007669"/>
    <property type="project" value="RHEA"/>
</dbReference>
<dbReference type="GO" id="GO:0004674">
    <property type="term" value="F:protein serine/threonine kinase activity"/>
    <property type="evidence" value="ECO:0000315"/>
    <property type="project" value="UniProtKB"/>
</dbReference>
<dbReference type="GO" id="GO:0006887">
    <property type="term" value="P:exocytosis"/>
    <property type="evidence" value="ECO:0000315"/>
    <property type="project" value="UniProtKB"/>
</dbReference>
<dbReference type="GO" id="GO:0030252">
    <property type="term" value="P:growth hormone secretion"/>
    <property type="evidence" value="ECO:0000315"/>
    <property type="project" value="UniProtKB"/>
</dbReference>
<dbReference type="GO" id="GO:0031175">
    <property type="term" value="P:neuron projection development"/>
    <property type="evidence" value="ECO:0000315"/>
    <property type="project" value="UniProtKB"/>
</dbReference>
<dbReference type="GO" id="GO:0010508">
    <property type="term" value="P:positive regulation of autophagy"/>
    <property type="evidence" value="ECO:0007669"/>
    <property type="project" value="Ensembl"/>
</dbReference>
<dbReference type="GO" id="GO:0061178">
    <property type="term" value="P:regulation of insulin secretion involved in cellular response to glucose stimulus"/>
    <property type="evidence" value="ECO:0000315"/>
    <property type="project" value="UniProtKB"/>
</dbReference>
<dbReference type="GO" id="GO:0007283">
    <property type="term" value="P:spermatogenesis"/>
    <property type="evidence" value="ECO:0000315"/>
    <property type="project" value="UniProtKB"/>
</dbReference>
<dbReference type="CDD" id="cd07873">
    <property type="entry name" value="STKc_PCTAIRE1"/>
    <property type="match status" value="1"/>
</dbReference>
<dbReference type="FunFam" id="3.30.200.20:FF:000007">
    <property type="entry name" value="Cyclin-dependent kinase 14, putative"/>
    <property type="match status" value="1"/>
</dbReference>
<dbReference type="FunFam" id="1.10.510.10:FF:000061">
    <property type="entry name" value="Putative cyclin-dependent kinase 17"/>
    <property type="match status" value="1"/>
</dbReference>
<dbReference type="Gene3D" id="3.30.200.20">
    <property type="entry name" value="Phosphorylase Kinase, domain 1"/>
    <property type="match status" value="1"/>
</dbReference>
<dbReference type="Gene3D" id="1.10.510.10">
    <property type="entry name" value="Transferase(Phosphotransferase) domain 1"/>
    <property type="match status" value="1"/>
</dbReference>
<dbReference type="InterPro" id="IPR050108">
    <property type="entry name" value="CDK"/>
</dbReference>
<dbReference type="InterPro" id="IPR011009">
    <property type="entry name" value="Kinase-like_dom_sf"/>
</dbReference>
<dbReference type="InterPro" id="IPR000719">
    <property type="entry name" value="Prot_kinase_dom"/>
</dbReference>
<dbReference type="InterPro" id="IPR017441">
    <property type="entry name" value="Protein_kinase_ATP_BS"/>
</dbReference>
<dbReference type="InterPro" id="IPR008271">
    <property type="entry name" value="Ser/Thr_kinase_AS"/>
</dbReference>
<dbReference type="PANTHER" id="PTHR24056">
    <property type="entry name" value="CELL DIVISION PROTEIN KINASE"/>
    <property type="match status" value="1"/>
</dbReference>
<dbReference type="PANTHER" id="PTHR24056:SF174">
    <property type="entry name" value="CYCLIN-DEPENDENT KINASE 16"/>
    <property type="match status" value="1"/>
</dbReference>
<dbReference type="Pfam" id="PF00069">
    <property type="entry name" value="Pkinase"/>
    <property type="match status" value="1"/>
</dbReference>
<dbReference type="SMART" id="SM00220">
    <property type="entry name" value="S_TKc"/>
    <property type="match status" value="1"/>
</dbReference>
<dbReference type="SUPFAM" id="SSF56112">
    <property type="entry name" value="Protein kinase-like (PK-like)"/>
    <property type="match status" value="1"/>
</dbReference>
<dbReference type="PROSITE" id="PS00107">
    <property type="entry name" value="PROTEIN_KINASE_ATP"/>
    <property type="match status" value="1"/>
</dbReference>
<dbReference type="PROSITE" id="PS50011">
    <property type="entry name" value="PROTEIN_KINASE_DOM"/>
    <property type="match status" value="1"/>
</dbReference>
<dbReference type="PROSITE" id="PS00108">
    <property type="entry name" value="PROTEIN_KINASE_ST"/>
    <property type="match status" value="1"/>
</dbReference>
<feature type="chain" id="PRO_0000086485" description="Cyclin-dependent kinase 16">
    <location>
        <begin position="1"/>
        <end position="496"/>
    </location>
</feature>
<feature type="domain" description="Protein kinase" evidence="4">
    <location>
        <begin position="165"/>
        <end position="446"/>
    </location>
</feature>
<feature type="region of interest" description="Disordered" evidence="6">
    <location>
        <begin position="1"/>
        <end position="95"/>
    </location>
</feature>
<feature type="compositionally biased region" description="Basic and acidic residues" evidence="6">
    <location>
        <begin position="69"/>
        <end position="78"/>
    </location>
</feature>
<feature type="compositionally biased region" description="Polar residues" evidence="6">
    <location>
        <begin position="83"/>
        <end position="93"/>
    </location>
</feature>
<feature type="active site" description="Proton acceptor" evidence="4 5">
    <location>
        <position position="286"/>
    </location>
</feature>
<feature type="binding site" evidence="4">
    <location>
        <begin position="171"/>
        <end position="179"/>
    </location>
    <ligand>
        <name>ATP</name>
        <dbReference type="ChEBI" id="CHEBI:30616"/>
    </ligand>
</feature>
<feature type="binding site" evidence="4">
    <location>
        <position position="194"/>
    </location>
    <ligand>
        <name>ATP</name>
        <dbReference type="ChEBI" id="CHEBI:30616"/>
    </ligand>
</feature>
<feature type="modified residue" description="Phosphoserine; by BRSK2" evidence="12">
    <location>
        <position position="12"/>
    </location>
</feature>
<feature type="modified residue" description="Phosphoserine" evidence="12">
    <location>
        <position position="36"/>
    </location>
</feature>
<feature type="modified residue" description="Phosphoserine" evidence="2">
    <location>
        <position position="42"/>
    </location>
</feature>
<feature type="modified residue" description="Phosphoserine" evidence="12">
    <location>
        <position position="64"/>
    </location>
</feature>
<feature type="modified residue" description="Phosphoserine" evidence="12">
    <location>
        <position position="65"/>
    </location>
</feature>
<feature type="modified residue" description="Phosphoserine" evidence="12 16">
    <location>
        <position position="78"/>
    </location>
</feature>
<feature type="modified residue" description="Phosphoserine" evidence="12">
    <location>
        <position position="82"/>
    </location>
</feature>
<feature type="modified residue" description="Phosphoserine" evidence="12">
    <location>
        <position position="89"/>
    </location>
</feature>
<feature type="modified residue" description="Phosphoserine; by CDK5" evidence="8 12 16">
    <location>
        <position position="95"/>
    </location>
</feature>
<feature type="modified residue" description="Phosphoserine" evidence="12">
    <location>
        <position position="110"/>
    </location>
</feature>
<feature type="modified residue" description="Phosphoserine" evidence="12">
    <location>
        <position position="119"/>
    </location>
</feature>
<feature type="modified residue" description="Phosphoserine" evidence="12">
    <location>
        <position position="138"/>
    </location>
</feature>
<feature type="modified residue" description="Phosphoserine" evidence="12">
    <location>
        <position position="146"/>
    </location>
</feature>
<feature type="modified residue" description="Phosphoserine" evidence="12 16">
    <location>
        <position position="153"/>
    </location>
</feature>
<feature type="modified residue" description="Phosphoserine" evidence="2">
    <location>
        <position position="155"/>
    </location>
</feature>
<feature type="modified residue" description="Phosphothreonine" evidence="12">
    <location>
        <position position="175"/>
    </location>
</feature>
<feature type="modified residue" description="Phosphothreonine" evidence="12">
    <location>
        <position position="380"/>
    </location>
</feature>
<feature type="modified residue" description="Phosphoserine" evidence="12">
    <location>
        <position position="391"/>
    </location>
</feature>
<feature type="modified residue" description="Phosphoserine" evidence="12">
    <location>
        <position position="478"/>
    </location>
</feature>
<feature type="modified residue" description="Phosphoserine" evidence="12">
    <location>
        <position position="480"/>
    </location>
</feature>
<feature type="splice variant" id="VSP_004801" description="In isoform Short." evidence="14">
    <location>
        <begin position="1"/>
        <end position="66"/>
    </location>
</feature>
<feature type="splice variant" id="VSP_004802" description="In isoform Short." evidence="14">
    <original>P</original>
    <variation>MYTNGYDEEIYYIGGKRVFLTPKAWPFPLPTP</variation>
    <location>
        <position position="67"/>
    </location>
</feature>
<feature type="mutagenesis site" description="Does not affect interaction with CCNYl1." evidence="12">
    <original>S</original>
    <variation>A</variation>
    <variation>D</variation>
    <location>
        <position position="36"/>
    </location>
</feature>
<feature type="mutagenesis site" description="Increases interaction with CCNYl1." evidence="12">
    <original>S</original>
    <variation>A</variation>
    <location>
        <position position="78"/>
    </location>
</feature>
<feature type="mutagenesis site" description="Abolishes phosphorylation by CDK5. Impairs normal dendrite development." evidence="8">
    <original>S</original>
    <variation>A</variation>
    <location>
        <position position="95"/>
    </location>
</feature>
<feature type="mutagenesis site" description="Reduces interaction with CCNYL1." evidence="12">
    <original>S</original>
    <variation>A</variation>
    <variation>D</variation>
    <location>
        <position position="110"/>
    </location>
</feature>
<feature type="mutagenesis site" description="Reduces interaction with CCNYL1." evidence="12">
    <original>S</original>
    <variation>A</variation>
    <location>
        <position position="119"/>
    </location>
</feature>
<feature type="mutagenesis site" description="Abolishes interaction with CCNYl1. Decreases protein kinase activity." evidence="12">
    <original>S</original>
    <variation>A</variation>
    <variation>D</variation>
    <location>
        <position position="146"/>
    </location>
</feature>
<feature type="mutagenesis site" description="Increases interaction with CCNYl1." evidence="12">
    <original>S</original>
    <variation>A</variation>
    <location>
        <position position="153"/>
    </location>
</feature>
<feature type="mutagenesis site" description="Reduces interaction with CCNYL1." evidence="12">
    <original>S</original>
    <variation>D</variation>
    <location>
        <position position="153"/>
    </location>
</feature>
<feature type="mutagenesis site" description="Reduces interaction with CCNYL1." evidence="12">
    <original>T</original>
    <variation>A</variation>
    <location>
        <position position="175"/>
    </location>
</feature>
<feature type="mutagenesis site" description="Increasse interaction with CCNYL1." evidence="12">
    <original>T</original>
    <variation>D</variation>
    <location>
        <position position="175"/>
    </location>
</feature>
<feature type="mutagenesis site" description="Does not affect interaction with CCNYl1." evidence="12">
    <original>K</original>
    <variation>R</variation>
    <location>
        <position position="194"/>
    </location>
</feature>
<feature type="mutagenesis site" description="Does not affect interaction with CCNYl1." evidence="12">
    <original>S</original>
    <variation>A</variation>
    <variation>D</variation>
    <location>
        <position position="480"/>
    </location>
</feature>
<reference key="1">
    <citation type="journal article" date="1992" name="Oncogene">
        <title>PCTAIRE-1 and PCTAIRE-3, two members of a novel cdc2/CDC28-related protein kinase gene family.</title>
        <authorList>
            <person name="Okuda T."/>
            <person name="Cleveland J.L."/>
            <person name="Downing J.R."/>
        </authorList>
    </citation>
    <scope>NUCLEOTIDE SEQUENCE [MRNA] (ISOFORM LONG)</scope>
    <source>
        <tissue>Fibroblast</tissue>
    </source>
</reference>
<reference key="2">
    <citation type="journal article" date="2004" name="Genome Res.">
        <title>The status, quality, and expansion of the NIH full-length cDNA project: the Mammalian Gene Collection (MGC).</title>
        <authorList>
            <consortium name="The MGC Project Team"/>
        </authorList>
    </citation>
    <scope>NUCLEOTIDE SEQUENCE [LARGE SCALE MRNA] (ISOFORM LONG)</scope>
</reference>
<reference key="3">
    <citation type="journal article" date="1993" name="Gene">
        <title>Novel CDC2-related protein kinases produced in murine hematopoietic stem cells.</title>
        <authorList>
            <person name="Ershler M.A."/>
            <person name="Nagorskaya T.V."/>
            <person name="Visser J.W.M."/>
            <person name="Belyavsky A.V."/>
        </authorList>
    </citation>
    <scope>NUCLEOTIDE SEQUENCE [MRNA] OF 290-325</scope>
    <source>
        <strain>CBA/J</strain>
        <tissue>Bone marrow</tissue>
    </source>
</reference>
<reference key="4">
    <citation type="journal article" date="1997" name="Mol. Gen. Genet.">
        <title>The Cdk-like protein PCTAIRE-1 from mouse brain associates with p11 and 14-3-3 proteins.</title>
        <authorList>
            <person name="Sladeczek F."/>
            <person name="Camonis J.H."/>
            <person name="Burnol A.-F."/>
            <person name="Le Bouffant F."/>
        </authorList>
    </citation>
    <scope>INTERACTION WITH YWHAH; YWHAQ AND YWHAZ</scope>
</reference>
<reference key="5">
    <citation type="journal article" date="2006" name="J. Biol. Chem.">
        <title>Pctaire1 phosphorylates N-ethylmaleimide-sensitive fusion protein: implications in the regulation of its hexamerization and exocytosis.</title>
        <authorList>
            <person name="Liu Y."/>
            <person name="Cheng K."/>
            <person name="Gong K."/>
            <person name="Fu A.K."/>
            <person name="Ip N.Y."/>
        </authorList>
    </citation>
    <scope>FUNCTION</scope>
    <scope>CATALYTIC ACTIVITY</scope>
    <scope>INTERACTION WITH NSF</scope>
</reference>
<reference key="6">
    <citation type="journal article" date="2010" name="Cell">
        <title>A tissue-specific atlas of mouse protein phosphorylation and expression.</title>
        <authorList>
            <person name="Huttlin E.L."/>
            <person name="Jedrychowski M.P."/>
            <person name="Elias J.E."/>
            <person name="Goswami T."/>
            <person name="Rad R."/>
            <person name="Beausoleil S.A."/>
            <person name="Villen J."/>
            <person name="Haas W."/>
            <person name="Sowa M.E."/>
            <person name="Gygi S.P."/>
        </authorList>
    </citation>
    <scope>PHOSPHORYLATION [LARGE SCALE ANALYSIS] AT SER-78; SER-95 AND SER-153</scope>
    <scope>IDENTIFICATION BY MASS SPECTROMETRY [LARGE SCALE ANALYSIS]</scope>
    <source>
        <tissue>Brain</tissue>
        <tissue>Kidney</tissue>
        <tissue>Lung</tissue>
        <tissue>Spleen</tissue>
        <tissue>Testis</tissue>
    </source>
</reference>
<reference key="7">
    <citation type="journal article" date="2011" name="Neuroscience">
        <title>Cyclin-dependent kinase 5-dependent phosphorylation of Pctaire1 regulates dendrite development.</title>
        <authorList>
            <person name="Fu W.Y."/>
            <person name="Cheng K."/>
            <person name="Fu A.K."/>
            <person name="Ip N.Y."/>
        </authorList>
    </citation>
    <scope>FUNCTION</scope>
    <scope>MUTAGENESIS OF SER-95</scope>
    <scope>PHOSPHORYLATION AT SER-95</scope>
</reference>
<reference key="8">
    <citation type="journal article" date="2012" name="Cell. Signal.">
        <title>Analysis of substrate specificity and cyclin Y binding of PCTAIRE-1 kinase.</title>
        <authorList>
            <person name="Shehata S.N."/>
            <person name="Hunter R.W."/>
            <person name="Ohta E."/>
            <person name="Peggie M.W."/>
            <person name="Lou H.J."/>
            <person name="Sicheri F."/>
            <person name="Zeqiraj E."/>
            <person name="Turk B.E."/>
            <person name="Sakamoto K."/>
        </authorList>
    </citation>
    <scope>CATALYTIC ACTIVITY</scope>
    <scope>FUNCTION</scope>
    <scope>INTERACTION WITH CCNY</scope>
    <scope>TISSUE SPECIFICITY</scope>
</reference>
<reference key="9">
    <citation type="journal article" date="2012" name="J. Biol. Chem.">
        <title>Brain-selective kinase 2 (BRSK2) phosphorylation on PCTAIRE1 negatively regulates glucose-stimulated insulin secretion in pancreatic beta-cells.</title>
        <authorList>
            <person name="Chen X.Y."/>
            <person name="Gu X.T."/>
            <person name="Saiyin H."/>
            <person name="Wan B."/>
            <person name="Zhang Y.J."/>
            <person name="Li J."/>
            <person name="Wang Y.L."/>
            <person name="Gao R."/>
            <person name="Wang Y.F."/>
            <person name="Dong W.P."/>
            <person name="Najjar S.M."/>
            <person name="Zhang C.Y."/>
            <person name="Ding H.F."/>
            <person name="Liu J.O."/>
            <person name="Yu L."/>
        </authorList>
    </citation>
    <scope>FUNCTION</scope>
    <scope>TISSUE SPECIFICITY</scope>
</reference>
<reference key="10">
    <citation type="journal article" date="2012" name="Mol. Cell. Biol.">
        <title>Cyclin-dependent kinase 16/PCTAIRE kinase 1 is activated by cyclin Y and is essential for spermatogenesis.</title>
        <authorList>
            <person name="Mikolcevic P."/>
            <person name="Sigl R."/>
            <person name="Rauch V."/>
            <person name="Hess M.W."/>
            <person name="Pfaller K."/>
            <person name="Barisic M."/>
            <person name="Pelliniemi L.J."/>
            <person name="Boesl M."/>
            <person name="Geley S."/>
        </authorList>
    </citation>
    <scope>DISRUPTION PHENOTYPE</scope>
    <scope>FUNCTION</scope>
    <scope>CATALYTIC ACTIVITY</scope>
    <scope>INTERACTION WITH CCNY</scope>
    <scope>TISSUE SPECIFICITY</scope>
</reference>
<reference key="11">
    <citation type="journal article" date="2015" name="PLoS Genet.">
        <title>CCNYL1, but Not CCNY, Cooperates with CDK16 to Regulate Spermatogenesis in Mouse.</title>
        <authorList>
            <person name="Zi Z."/>
            <person name="Zhang Z."/>
            <person name="Li Q."/>
            <person name="An W."/>
            <person name="Zeng L."/>
            <person name="Gao D."/>
            <person name="Yang Y."/>
            <person name="Zhu X."/>
            <person name="Zeng R."/>
            <person name="Shum W.W."/>
            <person name="Wu J."/>
        </authorList>
    </citation>
    <scope>FUNCTION</scope>
    <scope>CATALYTIC ACTIVITY</scope>
    <scope>SUBCELLULAR LOCATION</scope>
    <scope>INTERACTION WITH CCNYL1</scope>
    <scope>MUTAGENESIS OF SER-36; SER-78; SER-110; SER-119; SER-146; SER-153; THR-175; LYS-194 AND SER-480</scope>
    <scope>MASS SPECTROMETRY</scope>
    <scope>PHOSPHORYLATION AT SER-12; SER-36; SER-64; SER-65; SER-78; SER-82; SER-89; SER-95; SER-110; SER-119; SER-138; SER-146; SER-153; THR-175; THR-380; SER-391; SER-478 AND SER-480</scope>
</reference>
<accession>Q04735</accession>
<keyword id="KW-0025">Alternative splicing</keyword>
<keyword id="KW-0067">ATP-binding</keyword>
<keyword id="KW-1003">Cell membrane</keyword>
<keyword id="KW-0963">Cytoplasm</keyword>
<keyword id="KW-0968">Cytoplasmic vesicle</keyword>
<keyword id="KW-0221">Differentiation</keyword>
<keyword id="KW-0418">Kinase</keyword>
<keyword id="KW-0472">Membrane</keyword>
<keyword id="KW-0547">Nucleotide-binding</keyword>
<keyword id="KW-0597">Phosphoprotein</keyword>
<keyword id="KW-1185">Reference proteome</keyword>
<keyword id="KW-0723">Serine/threonine-protein kinase</keyword>
<keyword id="KW-0744">Spermatogenesis</keyword>
<keyword id="KW-0770">Synapse</keyword>
<keyword id="KW-0771">Synaptosome</keyword>
<keyword id="KW-0808">Transferase</keyword>
<comment type="function">
    <text evidence="1 7 8 9 10 11">Protein kinase that plays a role in vesicle-mediated transport processes and exocytosis. Can phosphorylate CCNY at 'Ser-336' (in vitro) (By similarity). Plays a role in the regulation of insulin secretion in response to changes in blood glucose levels. Regulates GH1 release by brain neurons. Phosphorylates NSF, and thereby regulates NSF oligomerization. Required for normal spermatogenesis. Regulates neuron differentiation and dendrite development.</text>
</comment>
<comment type="catalytic activity">
    <reaction evidence="7 9 10 15">
        <text>L-seryl-[protein] + ATP = O-phospho-L-seryl-[protein] + ADP + H(+)</text>
        <dbReference type="Rhea" id="RHEA:17989"/>
        <dbReference type="Rhea" id="RHEA-COMP:9863"/>
        <dbReference type="Rhea" id="RHEA-COMP:11604"/>
        <dbReference type="ChEBI" id="CHEBI:15378"/>
        <dbReference type="ChEBI" id="CHEBI:29999"/>
        <dbReference type="ChEBI" id="CHEBI:30616"/>
        <dbReference type="ChEBI" id="CHEBI:83421"/>
        <dbReference type="ChEBI" id="CHEBI:456216"/>
        <dbReference type="EC" id="2.7.11.22"/>
    </reaction>
</comment>
<comment type="catalytic activity">
    <reaction evidence="7 9 10 15">
        <text>L-threonyl-[protein] + ATP = O-phospho-L-threonyl-[protein] + ADP + H(+)</text>
        <dbReference type="Rhea" id="RHEA:46608"/>
        <dbReference type="Rhea" id="RHEA-COMP:11060"/>
        <dbReference type="Rhea" id="RHEA-COMP:11605"/>
        <dbReference type="ChEBI" id="CHEBI:15378"/>
        <dbReference type="ChEBI" id="CHEBI:30013"/>
        <dbReference type="ChEBI" id="CHEBI:30616"/>
        <dbReference type="ChEBI" id="CHEBI:61977"/>
        <dbReference type="ChEBI" id="CHEBI:456216"/>
        <dbReference type="EC" id="2.7.11.22"/>
    </reaction>
</comment>
<comment type="subunit">
    <text evidence="1 7 9 10 12 13">Found in a complex containing CABLES1, CDK17 and TDRD7. Interacts with BRSK2. Identified in a complex with NSF, syntaxin-1, synaptotagmin, SYN1, SYP and CDK5R1 (By similarity). Interacts with YWHAH, YWHAQ and YWHAZ. Interacts with CCNY; this interaction increases the CDK16 kinase activity (PubMed:22796189). Interacts with CCNYL1; this interaction mutually increases the stability of CDK16 and CCNYL1 and increases the kinase activity of CDK16 (PubMed:26305884). Interacts with NSF.</text>
</comment>
<comment type="interaction">
    <interactant intactId="EBI-11615670">
        <id>Q04735</id>
    </interactant>
    <interactant intactId="EBI-772904">
        <id>Q8BGU5</id>
        <label>Ccny</label>
    </interactant>
    <organismsDiffer>false</organismsDiffer>
    <experiments>3</experiments>
</comment>
<comment type="interaction">
    <interactant intactId="EBI-11615670">
        <id>Q04735</id>
    </interactant>
    <interactant intactId="EBI-11683033">
        <id>D3YUJ3</id>
        <label>Ccnyl1</label>
    </interactant>
    <organismsDiffer>false</organismsDiffer>
    <experiments>7</experiments>
</comment>
<comment type="subcellular location">
    <subcellularLocation>
        <location evidence="12">Cytoplasm</location>
    </subcellularLocation>
    <subcellularLocation>
        <location evidence="3">Cytoplasmic vesicle</location>
        <location evidence="3">Secretory vesicle</location>
    </subcellularLocation>
    <subcellularLocation>
        <location evidence="12">Cell membrane</location>
        <topology evidence="2">Peripheral membrane protein</topology>
        <orientation evidence="2">Cytoplasmic side</orientation>
    </subcellularLocation>
    <subcellularLocation>
        <location evidence="3">Synapse</location>
        <location evidence="3">Synaptosome</location>
    </subcellularLocation>
    <text evidence="2">Colocalizes with insulin in pancreas islets. Recruited to the cell membrane by CCNY.</text>
</comment>
<comment type="alternative products">
    <event type="alternative splicing"/>
    <isoform>
        <id>Q04735-1</id>
        <name>Long</name>
        <sequence type="displayed"/>
    </isoform>
    <isoform>
        <id>Q04735-2</id>
        <name>Short</name>
        <sequence type="described" ref="VSP_004801 VSP_004802"/>
    </isoform>
</comment>
<comment type="tissue specificity">
    <text evidence="9 10 11">Highly expressed in testis and brain, and detected at lower levels in heart, skeletal muscle, adipose tissue, lung, spleen and pancreas (at protein level). Ubiquitous with highest levels in testis and brain, with longer form predominant in all tissues except the testis.</text>
</comment>
<comment type="PTM">
    <text evidence="2 12">Phosphorylation of CDK16 is essential for the binding of CCNY, but also essential for the regulation of CDK16 kinase activity (By similarity). Phosphorylation of CDK16 is essential for the binding of CCNYl1, but also essential for the regulation of CDK16 kinase activity (PubMed:26305884). Ser-146 and Ser-153 are the critical sites for the binding of CCNYL1 and for modulating CDK16 kinase activity (PubMed:26305884). Phosphorylation at Ser-153 inhibits kinase activity (By similarity).</text>
</comment>
<comment type="disruption phenotype">
    <text evidence="9">No visible phenotype in females; they are viable and fertile. Male mice are infertile, due to a defect in late stages of spermatogenesis.</text>
</comment>
<comment type="similarity">
    <text evidence="14">Belongs to the protein kinase superfamily. CMGC Ser/Thr protein kinase family. CDC2/CDKX subfamily.</text>
</comment>
<organism>
    <name type="scientific">Mus musculus</name>
    <name type="common">Mouse</name>
    <dbReference type="NCBI Taxonomy" id="10090"/>
    <lineage>
        <taxon>Eukaryota</taxon>
        <taxon>Metazoa</taxon>
        <taxon>Chordata</taxon>
        <taxon>Craniata</taxon>
        <taxon>Vertebrata</taxon>
        <taxon>Euteleostomi</taxon>
        <taxon>Mammalia</taxon>
        <taxon>Eutheria</taxon>
        <taxon>Euarchontoglires</taxon>
        <taxon>Glires</taxon>
        <taxon>Rodentia</taxon>
        <taxon>Myomorpha</taxon>
        <taxon>Muroidea</taxon>
        <taxon>Muridae</taxon>
        <taxon>Murinae</taxon>
        <taxon>Mus</taxon>
        <taxon>Mus</taxon>
    </lineage>
</organism>
<proteinExistence type="evidence at protein level"/>
<evidence type="ECO:0000250" key="1"/>
<evidence type="ECO:0000250" key="2">
    <source>
        <dbReference type="UniProtKB" id="Q00536"/>
    </source>
</evidence>
<evidence type="ECO:0000250" key="3">
    <source>
        <dbReference type="UniProtKB" id="Q63686"/>
    </source>
</evidence>
<evidence type="ECO:0000255" key="4">
    <source>
        <dbReference type="PROSITE-ProRule" id="PRU00159"/>
    </source>
</evidence>
<evidence type="ECO:0000255" key="5">
    <source>
        <dbReference type="PROSITE-ProRule" id="PRU10027"/>
    </source>
</evidence>
<evidence type="ECO:0000256" key="6">
    <source>
        <dbReference type="SAM" id="MobiDB-lite"/>
    </source>
</evidence>
<evidence type="ECO:0000269" key="7">
    <source>
    </source>
</evidence>
<evidence type="ECO:0000269" key="8">
    <source>
    </source>
</evidence>
<evidence type="ECO:0000269" key="9">
    <source>
    </source>
</evidence>
<evidence type="ECO:0000269" key="10">
    <source>
    </source>
</evidence>
<evidence type="ECO:0000269" key="11">
    <source>
    </source>
</evidence>
<evidence type="ECO:0000269" key="12">
    <source>
    </source>
</evidence>
<evidence type="ECO:0000269" key="13">
    <source>
    </source>
</evidence>
<evidence type="ECO:0000305" key="14"/>
<evidence type="ECO:0000305" key="15">
    <source>
    </source>
</evidence>
<evidence type="ECO:0007744" key="16">
    <source>
    </source>
</evidence>